<name>LON1_CAEEL</name>
<feature type="signal peptide" evidence="1">
    <location>
        <begin position="1"/>
        <end position="18"/>
    </location>
</feature>
<feature type="chain" id="PRO_0000006299" description="Protein lon-1">
    <location>
        <begin position="19"/>
        <end position="312"/>
    </location>
</feature>
<feature type="domain" description="SCP">
    <location>
        <begin position="87"/>
        <end position="209"/>
    </location>
</feature>
<feature type="region of interest" description="Disordered" evidence="2">
    <location>
        <begin position="265"/>
        <end position="312"/>
    </location>
</feature>
<feature type="compositionally biased region" description="Low complexity" evidence="2">
    <location>
        <begin position="265"/>
        <end position="284"/>
    </location>
</feature>
<feature type="compositionally biased region" description="Acidic residues" evidence="2">
    <location>
        <begin position="285"/>
        <end position="305"/>
    </location>
</feature>
<feature type="glycosylation site" description="N-linked (GlcNAc...) asparagine" evidence="1">
    <location>
        <position position="142"/>
    </location>
</feature>
<sequence>MNYLLTALIALLAPISVAYNVPHGFLTGEAVTSHSGPNDLDGELPATDEVKREKRGYFFPSHFQSDSGLLSRSEHPNEYLKKWITHEHNRYRRMVPASDMNMLYWSDELAASAQRHADTCDFRHSRGRINVGENIWAAPYSNYSDAISIWFNEVHNPRCGCNHAYKHCCGHYVQVVWAKTNLVGCGFSRCRDVQGVWGRGHRNVFVCHYNPQGNTVFVTARGQLYAMPAFTWASGDNGKCSNCPANAPACYQGLCYMPKNYEAPTTTTESTTTSTTTEEPTTTCEPDEPEAEGADNNQEEEEENNDGFRMRV</sequence>
<organism>
    <name type="scientific">Caenorhabditis elegans</name>
    <dbReference type="NCBI Taxonomy" id="6239"/>
    <lineage>
        <taxon>Eukaryota</taxon>
        <taxon>Metazoa</taxon>
        <taxon>Ecdysozoa</taxon>
        <taxon>Nematoda</taxon>
        <taxon>Chromadorea</taxon>
        <taxon>Rhabditida</taxon>
        <taxon>Rhabditina</taxon>
        <taxon>Rhabditomorpha</taxon>
        <taxon>Rhabditoidea</taxon>
        <taxon>Rhabditidae</taxon>
        <taxon>Peloderinae</taxon>
        <taxon>Caenorhabditis</taxon>
    </lineage>
</organism>
<gene>
    <name type="primary">lon-1</name>
    <name type="ORF">F48E8.1</name>
</gene>
<proteinExistence type="evidence at transcript level"/>
<protein>
    <recommendedName>
        <fullName>Protein lon-1</fullName>
    </recommendedName>
</protein>
<comment type="function">
    <text evidence="3">Regulates body size morphogenesis, but does not affect male tail development.</text>
</comment>
<comment type="tissue specificity">
    <text>Expressed in hypodermal tissues.</text>
</comment>
<comment type="similarity">
    <text evidence="4">Belongs to the CRISP family.</text>
</comment>
<keyword id="KW-0325">Glycoprotein</keyword>
<keyword id="KW-1185">Reference proteome</keyword>
<keyword id="KW-0732">Signal</keyword>
<dbReference type="EMBL" id="FO081421">
    <property type="protein sequence ID" value="CCD71508.1"/>
    <property type="molecule type" value="Genomic_DNA"/>
</dbReference>
<dbReference type="PIR" id="T16415">
    <property type="entry name" value="T16415"/>
</dbReference>
<dbReference type="RefSeq" id="NP_498166.1">
    <property type="nucleotide sequence ID" value="NM_065765.9"/>
</dbReference>
<dbReference type="SMR" id="Q09566"/>
<dbReference type="BioGRID" id="40982">
    <property type="interactions" value="3"/>
</dbReference>
<dbReference type="DIP" id="DIP-27422N"/>
<dbReference type="IntAct" id="Q09566">
    <property type="interactions" value="2"/>
</dbReference>
<dbReference type="STRING" id="6239.F48E8.1a.1"/>
<dbReference type="GlyCosmos" id="Q09566">
    <property type="glycosylation" value="1 site, No reported glycans"/>
</dbReference>
<dbReference type="PaxDb" id="6239-F48E8.1a"/>
<dbReference type="PeptideAtlas" id="Q09566"/>
<dbReference type="EnsemblMetazoa" id="F48E8.1a.1">
    <property type="protein sequence ID" value="F48E8.1a.1"/>
    <property type="gene ID" value="WBGene00003055"/>
</dbReference>
<dbReference type="GeneID" id="175753"/>
<dbReference type="KEGG" id="cel:CELE_F48E8.1"/>
<dbReference type="UCSC" id="F48E8.1c">
    <property type="organism name" value="c. elegans"/>
</dbReference>
<dbReference type="AGR" id="WB:WBGene00003055"/>
<dbReference type="CTD" id="175753"/>
<dbReference type="WormBase" id="F48E8.1a">
    <property type="protein sequence ID" value="CE01953"/>
    <property type="gene ID" value="WBGene00003055"/>
    <property type="gene designation" value="lon-1"/>
</dbReference>
<dbReference type="eggNOG" id="KOG3017">
    <property type="taxonomic scope" value="Eukaryota"/>
</dbReference>
<dbReference type="HOGENOM" id="CLU_970554_0_0_1"/>
<dbReference type="InParanoid" id="Q09566"/>
<dbReference type="OMA" id="NAPACYQ"/>
<dbReference type="OrthoDB" id="43654at2759"/>
<dbReference type="PhylomeDB" id="Q09566"/>
<dbReference type="Reactome" id="R-CEL-6798695">
    <property type="pathway name" value="Neutrophil degranulation"/>
</dbReference>
<dbReference type="PRO" id="PR:Q09566"/>
<dbReference type="Proteomes" id="UP000001940">
    <property type="component" value="Chromosome III"/>
</dbReference>
<dbReference type="Bgee" id="WBGene00003055">
    <property type="expression patterns" value="Expressed in adult organism and 3 other cell types or tissues"/>
</dbReference>
<dbReference type="ExpressionAtlas" id="Q09566">
    <property type="expression patterns" value="baseline and differential"/>
</dbReference>
<dbReference type="GO" id="GO:0005912">
    <property type="term" value="C:adherens junction"/>
    <property type="evidence" value="ECO:0000314"/>
    <property type="project" value="WormBase"/>
</dbReference>
<dbReference type="GO" id="GO:0005615">
    <property type="term" value="C:extracellular space"/>
    <property type="evidence" value="ECO:0000318"/>
    <property type="project" value="GO_Central"/>
</dbReference>
<dbReference type="GO" id="GO:0005886">
    <property type="term" value="C:plasma membrane"/>
    <property type="evidence" value="ECO:0000314"/>
    <property type="project" value="WormBase"/>
</dbReference>
<dbReference type="GO" id="GO:0030514">
    <property type="term" value="P:negative regulation of BMP signaling pathway"/>
    <property type="evidence" value="ECO:0000315"/>
    <property type="project" value="UniProtKB"/>
</dbReference>
<dbReference type="GO" id="GO:0032876">
    <property type="term" value="P:negative regulation of DNA endoreduplication"/>
    <property type="evidence" value="ECO:0000315"/>
    <property type="project" value="WormBase"/>
</dbReference>
<dbReference type="GO" id="GO:0040015">
    <property type="term" value="P:negative regulation of multicellular organism growth"/>
    <property type="evidence" value="ECO:0000315"/>
    <property type="project" value="UniProtKB"/>
</dbReference>
<dbReference type="GO" id="GO:0040010">
    <property type="term" value="P:positive regulation of growth rate"/>
    <property type="evidence" value="ECO:0000315"/>
    <property type="project" value="WormBase"/>
</dbReference>
<dbReference type="GO" id="GO:0042661">
    <property type="term" value="P:regulation of mesodermal cell fate specification"/>
    <property type="evidence" value="ECO:0000316"/>
    <property type="project" value="UniProtKB"/>
</dbReference>
<dbReference type="GO" id="GO:0022414">
    <property type="term" value="P:reproductive process"/>
    <property type="evidence" value="ECO:0000315"/>
    <property type="project" value="WormBase"/>
</dbReference>
<dbReference type="GO" id="GO:0019953">
    <property type="term" value="P:sexual reproduction"/>
    <property type="evidence" value="ECO:0000318"/>
    <property type="project" value="GO_Central"/>
</dbReference>
<dbReference type="CDD" id="cd05380">
    <property type="entry name" value="CAP_euk"/>
    <property type="match status" value="1"/>
</dbReference>
<dbReference type="FunFam" id="3.40.33.10:FF:000033">
    <property type="entry name" value="Protein lon-1"/>
    <property type="match status" value="1"/>
</dbReference>
<dbReference type="Gene3D" id="3.40.33.10">
    <property type="entry name" value="CAP"/>
    <property type="match status" value="1"/>
</dbReference>
<dbReference type="InterPro" id="IPR018244">
    <property type="entry name" value="Allrgn_V5/Tpx1_CS"/>
</dbReference>
<dbReference type="InterPro" id="IPR014044">
    <property type="entry name" value="CAP_dom"/>
</dbReference>
<dbReference type="InterPro" id="IPR035940">
    <property type="entry name" value="CAP_sf"/>
</dbReference>
<dbReference type="InterPro" id="IPR001283">
    <property type="entry name" value="CRISP-related"/>
</dbReference>
<dbReference type="PANTHER" id="PTHR10334">
    <property type="entry name" value="CYSTEINE-RICH SECRETORY PROTEIN-RELATED"/>
    <property type="match status" value="1"/>
</dbReference>
<dbReference type="Pfam" id="PF00188">
    <property type="entry name" value="CAP"/>
    <property type="match status" value="1"/>
</dbReference>
<dbReference type="PRINTS" id="PR00837">
    <property type="entry name" value="V5TPXLIKE"/>
</dbReference>
<dbReference type="SMART" id="SM00198">
    <property type="entry name" value="SCP"/>
    <property type="match status" value="1"/>
</dbReference>
<dbReference type="SUPFAM" id="SSF55797">
    <property type="entry name" value="PR-1-like"/>
    <property type="match status" value="1"/>
</dbReference>
<dbReference type="PROSITE" id="PS01009">
    <property type="entry name" value="CRISP_1"/>
    <property type="match status" value="1"/>
</dbReference>
<accession>Q09566</accession>
<evidence type="ECO:0000255" key="1"/>
<evidence type="ECO:0000256" key="2">
    <source>
        <dbReference type="SAM" id="MobiDB-lite"/>
    </source>
</evidence>
<evidence type="ECO:0000269" key="3">
    <source>
    </source>
</evidence>
<evidence type="ECO:0000305" key="4"/>
<reference key="1">
    <citation type="journal article" date="1998" name="Science">
        <title>Genome sequence of the nematode C. elegans: a platform for investigating biology.</title>
        <authorList>
            <consortium name="The C. elegans sequencing consortium"/>
        </authorList>
    </citation>
    <scope>NUCLEOTIDE SEQUENCE [LARGE SCALE GENOMIC DNA]</scope>
    <source>
        <strain>Bristol N2</strain>
    </source>
</reference>
<reference key="2">
    <citation type="journal article" date="2002" name="Dev. Biol.">
        <title>lon-1 regulates Caenorhabditis elegans body size downstream of the dbl-1 TGF beta signaling pathway.</title>
        <authorList>
            <person name="Maduzia L.L."/>
            <person name="Gumienny T.L."/>
            <person name="Zimmerman C.M."/>
            <person name="Wang H."/>
            <person name="Shetgiri P."/>
            <person name="Krishna S."/>
            <person name="Roberts A.F."/>
            <person name="Padgett R.W."/>
        </authorList>
    </citation>
    <scope>FUNCTION</scope>
</reference>